<keyword id="KW-0067">ATP-binding</keyword>
<keyword id="KW-0143">Chaperone</keyword>
<keyword id="KW-0547">Nucleotide-binding</keyword>
<keyword id="KW-0597">Phosphoprotein</keyword>
<keyword id="KW-1185">Reference proteome</keyword>
<keyword id="KW-0346">Stress response</keyword>
<evidence type="ECO:0000255" key="1">
    <source>
        <dbReference type="HAMAP-Rule" id="MF_00332"/>
    </source>
</evidence>
<evidence type="ECO:0000256" key="2">
    <source>
        <dbReference type="SAM" id="MobiDB-lite"/>
    </source>
</evidence>
<protein>
    <recommendedName>
        <fullName evidence="1">Chaperone protein DnaK</fullName>
    </recommendedName>
    <alternativeName>
        <fullName evidence="1">HSP70</fullName>
    </alternativeName>
    <alternativeName>
        <fullName evidence="1">Heat shock 70 kDa protein</fullName>
    </alternativeName>
    <alternativeName>
        <fullName evidence="1">Heat shock protein 70</fullName>
    </alternativeName>
</protein>
<reference key="1">
    <citation type="journal article" date="2005" name="Proc. Natl. Acad. Sci. U.S.A.">
        <title>The genome of Salinibacter ruber: convergence and gene exchange among hyperhalophilic bacteria and archaea.</title>
        <authorList>
            <person name="Mongodin E.F."/>
            <person name="Nelson K.E."/>
            <person name="Daugherty S."/>
            <person name="DeBoy R.T."/>
            <person name="Wister J."/>
            <person name="Khouri H."/>
            <person name="Weidman J."/>
            <person name="Walsh D.A."/>
            <person name="Papke R.T."/>
            <person name="Sanchez Perez G."/>
            <person name="Sharma A.K."/>
            <person name="Nesbo C.L."/>
            <person name="MacLeod D."/>
            <person name="Bapteste E."/>
            <person name="Doolittle W.F."/>
            <person name="Charlebois R.L."/>
            <person name="Legault B."/>
            <person name="Rodriguez-Valera F."/>
        </authorList>
    </citation>
    <scope>NUCLEOTIDE SEQUENCE [LARGE SCALE GENOMIC DNA]</scope>
    <source>
        <strain>DSM 13855 / CECT 5946 / M31</strain>
    </source>
</reference>
<organism>
    <name type="scientific">Salinibacter ruber (strain DSM 13855 / M31)</name>
    <dbReference type="NCBI Taxonomy" id="309807"/>
    <lineage>
        <taxon>Bacteria</taxon>
        <taxon>Pseudomonadati</taxon>
        <taxon>Rhodothermota</taxon>
        <taxon>Rhodothermia</taxon>
        <taxon>Rhodothermales</taxon>
        <taxon>Salinibacteraceae</taxon>
        <taxon>Salinibacter</taxon>
    </lineage>
</organism>
<gene>
    <name evidence="1" type="primary">dnaK</name>
    <name type="ordered locus">SRU_1300</name>
</gene>
<comment type="function">
    <text evidence="1">Acts as a chaperone.</text>
</comment>
<comment type="induction">
    <text evidence="1">By stress conditions e.g. heat shock.</text>
</comment>
<comment type="similarity">
    <text evidence="1">Belongs to the heat shock protein 70 family.</text>
</comment>
<dbReference type="EMBL" id="CP000159">
    <property type="protein sequence ID" value="ABC44636.1"/>
    <property type="molecule type" value="Genomic_DNA"/>
</dbReference>
<dbReference type="RefSeq" id="WP_011404052.1">
    <property type="nucleotide sequence ID" value="NC_007677.1"/>
</dbReference>
<dbReference type="RefSeq" id="YP_445424.1">
    <property type="nucleotide sequence ID" value="NC_007677.1"/>
</dbReference>
<dbReference type="SMR" id="Q2S307"/>
<dbReference type="STRING" id="309807.SRU_1300"/>
<dbReference type="EnsemblBacteria" id="ABC44636">
    <property type="protein sequence ID" value="ABC44636"/>
    <property type="gene ID" value="SRU_1300"/>
</dbReference>
<dbReference type="GeneID" id="83728214"/>
<dbReference type="KEGG" id="sru:SRU_1300"/>
<dbReference type="PATRIC" id="fig|309807.25.peg.1351"/>
<dbReference type="eggNOG" id="COG0443">
    <property type="taxonomic scope" value="Bacteria"/>
</dbReference>
<dbReference type="HOGENOM" id="CLU_005965_2_1_10"/>
<dbReference type="OrthoDB" id="9766019at2"/>
<dbReference type="Proteomes" id="UP000008674">
    <property type="component" value="Chromosome"/>
</dbReference>
<dbReference type="GO" id="GO:0005524">
    <property type="term" value="F:ATP binding"/>
    <property type="evidence" value="ECO:0007669"/>
    <property type="project" value="UniProtKB-UniRule"/>
</dbReference>
<dbReference type="GO" id="GO:0140662">
    <property type="term" value="F:ATP-dependent protein folding chaperone"/>
    <property type="evidence" value="ECO:0007669"/>
    <property type="project" value="InterPro"/>
</dbReference>
<dbReference type="GO" id="GO:0051082">
    <property type="term" value="F:unfolded protein binding"/>
    <property type="evidence" value="ECO:0007669"/>
    <property type="project" value="InterPro"/>
</dbReference>
<dbReference type="CDD" id="cd10234">
    <property type="entry name" value="ASKHA_NBD_HSP70_DnaK-like"/>
    <property type="match status" value="1"/>
</dbReference>
<dbReference type="FunFam" id="2.60.34.10:FF:000014">
    <property type="entry name" value="Chaperone protein DnaK HSP70"/>
    <property type="match status" value="1"/>
</dbReference>
<dbReference type="FunFam" id="1.20.1270.10:FF:000001">
    <property type="entry name" value="Molecular chaperone DnaK"/>
    <property type="match status" value="1"/>
</dbReference>
<dbReference type="FunFam" id="3.30.420.40:FF:000004">
    <property type="entry name" value="Molecular chaperone DnaK"/>
    <property type="match status" value="1"/>
</dbReference>
<dbReference type="FunFam" id="3.90.640.10:FF:000003">
    <property type="entry name" value="Molecular chaperone DnaK"/>
    <property type="match status" value="1"/>
</dbReference>
<dbReference type="Gene3D" id="1.20.1270.10">
    <property type="match status" value="1"/>
</dbReference>
<dbReference type="Gene3D" id="3.30.420.40">
    <property type="match status" value="2"/>
</dbReference>
<dbReference type="Gene3D" id="3.90.640.10">
    <property type="entry name" value="Actin, Chain A, domain 4"/>
    <property type="match status" value="1"/>
</dbReference>
<dbReference type="Gene3D" id="2.60.34.10">
    <property type="entry name" value="Substrate Binding Domain Of DNAk, Chain A, domain 1"/>
    <property type="match status" value="1"/>
</dbReference>
<dbReference type="HAMAP" id="MF_00332">
    <property type="entry name" value="DnaK"/>
    <property type="match status" value="1"/>
</dbReference>
<dbReference type="InterPro" id="IPR043129">
    <property type="entry name" value="ATPase_NBD"/>
</dbReference>
<dbReference type="InterPro" id="IPR012725">
    <property type="entry name" value="Chaperone_DnaK"/>
</dbReference>
<dbReference type="InterPro" id="IPR018181">
    <property type="entry name" value="Heat_shock_70_CS"/>
</dbReference>
<dbReference type="InterPro" id="IPR029048">
    <property type="entry name" value="HSP70_C_sf"/>
</dbReference>
<dbReference type="InterPro" id="IPR029047">
    <property type="entry name" value="HSP70_peptide-bd_sf"/>
</dbReference>
<dbReference type="InterPro" id="IPR013126">
    <property type="entry name" value="Hsp_70_fam"/>
</dbReference>
<dbReference type="NCBIfam" id="NF001413">
    <property type="entry name" value="PRK00290.1"/>
    <property type="match status" value="1"/>
</dbReference>
<dbReference type="NCBIfam" id="NF003520">
    <property type="entry name" value="PRK05183.1"/>
    <property type="match status" value="1"/>
</dbReference>
<dbReference type="NCBIfam" id="TIGR02350">
    <property type="entry name" value="prok_dnaK"/>
    <property type="match status" value="1"/>
</dbReference>
<dbReference type="PANTHER" id="PTHR19375">
    <property type="entry name" value="HEAT SHOCK PROTEIN 70KDA"/>
    <property type="match status" value="1"/>
</dbReference>
<dbReference type="Pfam" id="PF00012">
    <property type="entry name" value="HSP70"/>
    <property type="match status" value="1"/>
</dbReference>
<dbReference type="PRINTS" id="PR00301">
    <property type="entry name" value="HEATSHOCK70"/>
</dbReference>
<dbReference type="SUPFAM" id="SSF53067">
    <property type="entry name" value="Actin-like ATPase domain"/>
    <property type="match status" value="2"/>
</dbReference>
<dbReference type="SUPFAM" id="SSF100934">
    <property type="entry name" value="Heat shock protein 70kD (HSP70), C-terminal subdomain"/>
    <property type="match status" value="1"/>
</dbReference>
<dbReference type="SUPFAM" id="SSF100920">
    <property type="entry name" value="Heat shock protein 70kD (HSP70), peptide-binding domain"/>
    <property type="match status" value="1"/>
</dbReference>
<dbReference type="PROSITE" id="PS00297">
    <property type="entry name" value="HSP70_1"/>
    <property type="match status" value="1"/>
</dbReference>
<dbReference type="PROSITE" id="PS00329">
    <property type="entry name" value="HSP70_2"/>
    <property type="match status" value="1"/>
</dbReference>
<dbReference type="PROSITE" id="PS01036">
    <property type="entry name" value="HSP70_3"/>
    <property type="match status" value="1"/>
</dbReference>
<accession>Q2S307</accession>
<sequence>MGKVIGIDLGTTNSVVAVMEGDDPEVIENAEGSRTTPSVVAYKDDGERLVGAPAKRQAITNPENTVSSIKRFMGRFYDEVEDEIEEVPYEVVRGENDTARVQIGDRKYTPQEISAVVLQKLKQTAEDYLGQEVTDAVITVPAYFNDAQRKATQEAGEIAGLNVQRIINEPTAASLAYGLDDESDQVVAVYDLGGGTFDVSILELGDGVFEVNATYGDTHLGGDNFDKRLIDHIADEFEQDTGIDLRDDPMALQRLKEAAEEAKIELSSAKTTTINLPFITATDEGPQHLNMDLNRATFENLIEDLVEKTVPQMEKALDDAGHSKSDVDEVILVGGSTRVPLVQETVEDFFGKQANKSVNPDEVVSLGAAVQGGVLSGDVDDVLLLDVTPLNLGIETLGGVMTTLIEANTTIPTKESEVFSTAADNQTSVEVHVLQGDREMAKDNRTLGRFHLDGIPPAPRGTPQIEVTFDINADGILNVSAEDKDTGKEQSIRVEANSGLSDEEIEKMKEEAEQHAEEDERRKERADTINEANSMAYSVEQGLEEYGDKIPEDKRSTLQEALDALNEELETASADEDITALEDALEELNAAWSAAGEEIREAQQQQAQQGAAAGAGAGAAGAGAAAGAEGPAGGPTGGPASGNGAADSDEEDVQDADYEVVDEGDDE</sequence>
<proteinExistence type="inferred from homology"/>
<name>DNAK_SALRD</name>
<feature type="chain" id="PRO_1000059656" description="Chaperone protein DnaK">
    <location>
        <begin position="1"/>
        <end position="667"/>
    </location>
</feature>
<feature type="region of interest" description="Disordered" evidence="2">
    <location>
        <begin position="495"/>
        <end position="525"/>
    </location>
</feature>
<feature type="region of interest" description="Disordered" evidence="2">
    <location>
        <begin position="595"/>
        <end position="667"/>
    </location>
</feature>
<feature type="compositionally biased region" description="Basic and acidic residues" evidence="2">
    <location>
        <begin position="506"/>
        <end position="525"/>
    </location>
</feature>
<feature type="compositionally biased region" description="Low complexity" evidence="2">
    <location>
        <begin position="595"/>
        <end position="612"/>
    </location>
</feature>
<feature type="compositionally biased region" description="Gly residues" evidence="2">
    <location>
        <begin position="630"/>
        <end position="641"/>
    </location>
</feature>
<feature type="compositionally biased region" description="Acidic residues" evidence="2">
    <location>
        <begin position="647"/>
        <end position="667"/>
    </location>
</feature>
<feature type="modified residue" description="Phosphothreonine; by autocatalysis" evidence="1">
    <location>
        <position position="196"/>
    </location>
</feature>